<accession>Q04LY0</accession>
<proteinExistence type="inferred from homology"/>
<evidence type="ECO:0000255" key="1">
    <source>
        <dbReference type="HAMAP-Rule" id="MF_00332"/>
    </source>
</evidence>
<evidence type="ECO:0000256" key="2">
    <source>
        <dbReference type="SAM" id="MobiDB-lite"/>
    </source>
</evidence>
<name>DNAK_STRP2</name>
<comment type="function">
    <text evidence="1">Acts as a chaperone.</text>
</comment>
<comment type="induction">
    <text evidence="1">By stress conditions e.g. heat shock.</text>
</comment>
<comment type="similarity">
    <text evidence="1">Belongs to the heat shock protein 70 family.</text>
</comment>
<gene>
    <name evidence="1" type="primary">dnaK</name>
    <name type="ordered locus">SPD_0460</name>
</gene>
<organism>
    <name type="scientific">Streptococcus pneumoniae serotype 2 (strain D39 / NCTC 7466)</name>
    <dbReference type="NCBI Taxonomy" id="373153"/>
    <lineage>
        <taxon>Bacteria</taxon>
        <taxon>Bacillati</taxon>
        <taxon>Bacillota</taxon>
        <taxon>Bacilli</taxon>
        <taxon>Lactobacillales</taxon>
        <taxon>Streptococcaceae</taxon>
        <taxon>Streptococcus</taxon>
    </lineage>
</organism>
<keyword id="KW-0067">ATP-binding</keyword>
<keyword id="KW-0143">Chaperone</keyword>
<keyword id="KW-0547">Nucleotide-binding</keyword>
<keyword id="KW-0597">Phosphoprotein</keyword>
<keyword id="KW-1185">Reference proteome</keyword>
<keyword id="KW-0346">Stress response</keyword>
<reference key="1">
    <citation type="journal article" date="2007" name="J. Bacteriol.">
        <title>Genome sequence of Avery's virulent serotype 2 strain D39 of Streptococcus pneumoniae and comparison with that of unencapsulated laboratory strain R6.</title>
        <authorList>
            <person name="Lanie J.A."/>
            <person name="Ng W.-L."/>
            <person name="Kazmierczak K.M."/>
            <person name="Andrzejewski T.M."/>
            <person name="Davidsen T.M."/>
            <person name="Wayne K.J."/>
            <person name="Tettelin H."/>
            <person name="Glass J.I."/>
            <person name="Winkler M.E."/>
        </authorList>
    </citation>
    <scope>NUCLEOTIDE SEQUENCE [LARGE SCALE GENOMIC DNA]</scope>
    <source>
        <strain>D39 / NCTC 7466</strain>
    </source>
</reference>
<sequence length="607" mass="64812">MSKIIGIDLGTTNSAVAVLEGTESKIIANPEGNRTTPSVVSFKNGEIIVGDAAKRQAVTNPDTVISIKSKMGTSEKVSANGKEYTPQEISAMILQYLKGYAEDYLGEKVTKAVITVPAYFNDAQRQATKDAGKIAGLEVERIVNEPTAAALAYGLDKTDKEEKILVFDLGGGTFDVSILELGDGVFDVLSTAGDNKLGGDDFDQKIIDHLVAEFKKENGIDLSTDKMAMQRLKDAAEKAKKDLSGVTSTQISLPFITAGEAGPLHLEMTLTRAKFDDLTRDLVERTKVPVRQALSDAGLSLSEIDEVILVGGSTRIPAVVEAVKAETGKEPNKSVNPDEVVAMGAAIQGGVITGDVKDVVLLDVTPLSLGIETMGGVFTKLIDRNTTIPTSKSQVFSTAADNQPAVDIHVLQGERPMAADNKTLGRFQLTDIPAAPRGIPQIEVTFDIDKNGIVSVKAKDLGTQKEQTIVIQSNSGLTDEEIDRMMKDAEANAEADKKRKEEVDLRNEVDQAIFATEKTIKETEGKGFDAERDAAQAALDDLKKAQEDNNLDDMKAKLEALNEKAQGLAVKLYEQAAAAQQAQEGAEGAQATGNAGDDVVDGEFTEK</sequence>
<dbReference type="EMBL" id="CP000410">
    <property type="protein sequence ID" value="ABJ54794.1"/>
    <property type="molecule type" value="Genomic_DNA"/>
</dbReference>
<dbReference type="RefSeq" id="WP_000034662.1">
    <property type="nucleotide sequence ID" value="NZ_JAMLJR010000001.1"/>
</dbReference>
<dbReference type="SMR" id="Q04LY0"/>
<dbReference type="PaxDb" id="373153-SPD_0460"/>
<dbReference type="GeneID" id="45654055"/>
<dbReference type="KEGG" id="spd:SPD_0460"/>
<dbReference type="eggNOG" id="COG0443">
    <property type="taxonomic scope" value="Bacteria"/>
</dbReference>
<dbReference type="HOGENOM" id="CLU_005965_2_4_9"/>
<dbReference type="BioCyc" id="SPNE373153:G1G6V-502-MONOMER"/>
<dbReference type="Proteomes" id="UP000001452">
    <property type="component" value="Chromosome"/>
</dbReference>
<dbReference type="GO" id="GO:0005524">
    <property type="term" value="F:ATP binding"/>
    <property type="evidence" value="ECO:0007669"/>
    <property type="project" value="UniProtKB-UniRule"/>
</dbReference>
<dbReference type="GO" id="GO:0140662">
    <property type="term" value="F:ATP-dependent protein folding chaperone"/>
    <property type="evidence" value="ECO:0007669"/>
    <property type="project" value="InterPro"/>
</dbReference>
<dbReference type="GO" id="GO:0051082">
    <property type="term" value="F:unfolded protein binding"/>
    <property type="evidence" value="ECO:0007669"/>
    <property type="project" value="InterPro"/>
</dbReference>
<dbReference type="CDD" id="cd10234">
    <property type="entry name" value="ASKHA_NBD_HSP70_DnaK-like"/>
    <property type="match status" value="1"/>
</dbReference>
<dbReference type="FunFam" id="2.60.34.10:FF:000014">
    <property type="entry name" value="Chaperone protein DnaK HSP70"/>
    <property type="match status" value="1"/>
</dbReference>
<dbReference type="FunFam" id="1.20.1270.10:FF:000004">
    <property type="entry name" value="Molecular chaperone DnaK"/>
    <property type="match status" value="1"/>
</dbReference>
<dbReference type="FunFam" id="3.30.420.40:FF:000071">
    <property type="entry name" value="Molecular chaperone DnaK"/>
    <property type="match status" value="1"/>
</dbReference>
<dbReference type="FunFam" id="3.90.640.10:FF:000003">
    <property type="entry name" value="Molecular chaperone DnaK"/>
    <property type="match status" value="1"/>
</dbReference>
<dbReference type="Gene3D" id="1.20.1270.10">
    <property type="match status" value="1"/>
</dbReference>
<dbReference type="Gene3D" id="3.30.420.40">
    <property type="match status" value="2"/>
</dbReference>
<dbReference type="Gene3D" id="3.90.640.10">
    <property type="entry name" value="Actin, Chain A, domain 4"/>
    <property type="match status" value="1"/>
</dbReference>
<dbReference type="Gene3D" id="2.60.34.10">
    <property type="entry name" value="Substrate Binding Domain Of DNAk, Chain A, domain 1"/>
    <property type="match status" value="1"/>
</dbReference>
<dbReference type="HAMAP" id="MF_00332">
    <property type="entry name" value="DnaK"/>
    <property type="match status" value="1"/>
</dbReference>
<dbReference type="InterPro" id="IPR043129">
    <property type="entry name" value="ATPase_NBD"/>
</dbReference>
<dbReference type="InterPro" id="IPR012725">
    <property type="entry name" value="Chaperone_DnaK"/>
</dbReference>
<dbReference type="InterPro" id="IPR018181">
    <property type="entry name" value="Heat_shock_70_CS"/>
</dbReference>
<dbReference type="InterPro" id="IPR029048">
    <property type="entry name" value="HSP70_C_sf"/>
</dbReference>
<dbReference type="InterPro" id="IPR029047">
    <property type="entry name" value="HSP70_peptide-bd_sf"/>
</dbReference>
<dbReference type="InterPro" id="IPR013126">
    <property type="entry name" value="Hsp_70_fam"/>
</dbReference>
<dbReference type="NCBIfam" id="NF001413">
    <property type="entry name" value="PRK00290.1"/>
    <property type="match status" value="1"/>
</dbReference>
<dbReference type="NCBIfam" id="TIGR02350">
    <property type="entry name" value="prok_dnaK"/>
    <property type="match status" value="1"/>
</dbReference>
<dbReference type="PANTHER" id="PTHR19375">
    <property type="entry name" value="HEAT SHOCK PROTEIN 70KDA"/>
    <property type="match status" value="1"/>
</dbReference>
<dbReference type="Pfam" id="PF00012">
    <property type="entry name" value="HSP70"/>
    <property type="match status" value="1"/>
</dbReference>
<dbReference type="PRINTS" id="PR00301">
    <property type="entry name" value="HEATSHOCK70"/>
</dbReference>
<dbReference type="SUPFAM" id="SSF53067">
    <property type="entry name" value="Actin-like ATPase domain"/>
    <property type="match status" value="2"/>
</dbReference>
<dbReference type="SUPFAM" id="SSF100934">
    <property type="entry name" value="Heat shock protein 70kD (HSP70), C-terminal subdomain"/>
    <property type="match status" value="1"/>
</dbReference>
<dbReference type="SUPFAM" id="SSF100920">
    <property type="entry name" value="Heat shock protein 70kD (HSP70), peptide-binding domain"/>
    <property type="match status" value="1"/>
</dbReference>
<dbReference type="PROSITE" id="PS00297">
    <property type="entry name" value="HSP70_1"/>
    <property type="match status" value="1"/>
</dbReference>
<dbReference type="PROSITE" id="PS00329">
    <property type="entry name" value="HSP70_2"/>
    <property type="match status" value="1"/>
</dbReference>
<dbReference type="PROSITE" id="PS01036">
    <property type="entry name" value="HSP70_3"/>
    <property type="match status" value="1"/>
</dbReference>
<feature type="chain" id="PRO_1000059679" description="Chaperone protein DnaK">
    <location>
        <begin position="1"/>
        <end position="607"/>
    </location>
</feature>
<feature type="region of interest" description="Disordered" evidence="2">
    <location>
        <begin position="580"/>
        <end position="607"/>
    </location>
</feature>
<feature type="compositionally biased region" description="Low complexity" evidence="2">
    <location>
        <begin position="580"/>
        <end position="591"/>
    </location>
</feature>
<feature type="compositionally biased region" description="Acidic residues" evidence="2">
    <location>
        <begin position="598"/>
        <end position="607"/>
    </location>
</feature>
<feature type="modified residue" description="Phosphothreonine; by autocatalysis" evidence="1">
    <location>
        <position position="173"/>
    </location>
</feature>
<protein>
    <recommendedName>
        <fullName evidence="1">Chaperone protein DnaK</fullName>
    </recommendedName>
    <alternativeName>
        <fullName evidence="1">HSP70</fullName>
    </alternativeName>
    <alternativeName>
        <fullName evidence="1">Heat shock 70 kDa protein</fullName>
    </alternativeName>
    <alternativeName>
        <fullName evidence="1">Heat shock protein 70</fullName>
    </alternativeName>
</protein>